<proteinExistence type="inferred from homology"/>
<protein>
    <recommendedName>
        <fullName evidence="1">Lipid-A-disaccharide synthase</fullName>
        <ecNumber evidence="1">2.4.1.182</ecNumber>
    </recommendedName>
</protein>
<accession>B7M1Y5</accession>
<feature type="chain" id="PRO_1000191483" description="Lipid-A-disaccharide synthase">
    <location>
        <begin position="1"/>
        <end position="382"/>
    </location>
</feature>
<gene>
    <name evidence="1" type="primary">lpxB</name>
    <name type="ordered locus">ECIAI1_0182</name>
</gene>
<sequence>MTEQRPLTIALVAGETSGDILGAGLIRALKERVPNARFVGVAGPRMQAEGCEAWYEMEELAVMGIVEVLGRLRRLLHIRADLTKRFGELKPDIFVGIDAPDFNITLEGNLKKQGIKTIHYVSPSVWAWRQKRVFKIGRATDLVLAFLPFEKAFYDKYNVPCRFIGHTMADAMPLDPDKNAARDVLGIPHDAHCLALLPGSRGAEVEMLSADFLKTAQLLRQTYPDLEIVVPLVNAKRREQFERIKAEVAPDLSVHLLDGMGREAMVASDAALLASGTAALECMLAKCPMVVGYRMKPFTFWLAKRLVKTDYVSLPNLLAGRELVKELLQEECEPQKLAAALLPLLANGKTSHAMHDTFRELHQQIRCNADEQAAQAVLELAQ</sequence>
<name>LPXB_ECO8A</name>
<comment type="function">
    <text evidence="1">Condensation of UDP-2,3-diacylglucosamine and 2,3-diacylglucosamine-1-phosphate to form lipid A disaccharide, a precursor of lipid A, a phosphorylated glycolipid that anchors the lipopolysaccharide to the outer membrane of the cell.</text>
</comment>
<comment type="catalytic activity">
    <reaction evidence="1">
        <text>2-N,3-O-bis[(3R)-3-hydroxytetradecanoyl]-alpha-D-glucosaminyl 1-phosphate + UDP-2-N,3-O-bis[(3R)-3-hydroxytetradecanoyl]-alpha-D-glucosamine = lipid A disaccharide (E. coli) + UDP + H(+)</text>
        <dbReference type="Rhea" id="RHEA:22668"/>
        <dbReference type="ChEBI" id="CHEBI:15378"/>
        <dbReference type="ChEBI" id="CHEBI:57957"/>
        <dbReference type="ChEBI" id="CHEBI:58223"/>
        <dbReference type="ChEBI" id="CHEBI:58466"/>
        <dbReference type="ChEBI" id="CHEBI:78847"/>
    </reaction>
</comment>
<comment type="catalytic activity">
    <reaction evidence="1">
        <text>a lipid X + a UDP-2-N,3-O-bis[(3R)-3-hydroxyacyl]-alpha-D-glucosamine = a lipid A disaccharide + UDP + H(+)</text>
        <dbReference type="Rhea" id="RHEA:67828"/>
        <dbReference type="ChEBI" id="CHEBI:15378"/>
        <dbReference type="ChEBI" id="CHEBI:58223"/>
        <dbReference type="ChEBI" id="CHEBI:137748"/>
        <dbReference type="ChEBI" id="CHEBI:176338"/>
        <dbReference type="ChEBI" id="CHEBI:176343"/>
        <dbReference type="EC" id="2.4.1.182"/>
    </reaction>
</comment>
<comment type="pathway">
    <text evidence="1">Glycolipid biosynthesis; lipid IV(A) biosynthesis; lipid IV(A) from (3R)-3-hydroxytetradecanoyl-[acyl-carrier-protein] and UDP-N-acetyl-alpha-D-glucosamine: step 5/6.</text>
</comment>
<comment type="similarity">
    <text evidence="1">Belongs to the LpxB family.</text>
</comment>
<dbReference type="EC" id="2.4.1.182" evidence="1"/>
<dbReference type="EMBL" id="CU928160">
    <property type="protein sequence ID" value="CAQ97069.1"/>
    <property type="molecule type" value="Genomic_DNA"/>
</dbReference>
<dbReference type="RefSeq" id="WP_000139659.1">
    <property type="nucleotide sequence ID" value="NC_011741.1"/>
</dbReference>
<dbReference type="SMR" id="B7M1Y5"/>
<dbReference type="CAZy" id="GT19">
    <property type="family name" value="Glycosyltransferase Family 19"/>
</dbReference>
<dbReference type="KEGG" id="ecr:ECIAI1_0182"/>
<dbReference type="HOGENOM" id="CLU_036577_3_0_6"/>
<dbReference type="UniPathway" id="UPA00359">
    <property type="reaction ID" value="UER00481"/>
</dbReference>
<dbReference type="GO" id="GO:0016020">
    <property type="term" value="C:membrane"/>
    <property type="evidence" value="ECO:0007669"/>
    <property type="project" value="GOC"/>
</dbReference>
<dbReference type="GO" id="GO:0008915">
    <property type="term" value="F:lipid-A-disaccharide synthase activity"/>
    <property type="evidence" value="ECO:0007669"/>
    <property type="project" value="UniProtKB-UniRule"/>
</dbReference>
<dbReference type="GO" id="GO:0005543">
    <property type="term" value="F:phospholipid binding"/>
    <property type="evidence" value="ECO:0007669"/>
    <property type="project" value="TreeGrafter"/>
</dbReference>
<dbReference type="GO" id="GO:0009245">
    <property type="term" value="P:lipid A biosynthetic process"/>
    <property type="evidence" value="ECO:0007669"/>
    <property type="project" value="UniProtKB-UniRule"/>
</dbReference>
<dbReference type="CDD" id="cd01635">
    <property type="entry name" value="Glycosyltransferase_GTB-type"/>
    <property type="match status" value="1"/>
</dbReference>
<dbReference type="HAMAP" id="MF_00392">
    <property type="entry name" value="LpxB"/>
    <property type="match status" value="1"/>
</dbReference>
<dbReference type="InterPro" id="IPR003835">
    <property type="entry name" value="Glyco_trans_19"/>
</dbReference>
<dbReference type="NCBIfam" id="TIGR00215">
    <property type="entry name" value="lpxB"/>
    <property type="match status" value="1"/>
</dbReference>
<dbReference type="PANTHER" id="PTHR30372">
    <property type="entry name" value="LIPID-A-DISACCHARIDE SYNTHASE"/>
    <property type="match status" value="1"/>
</dbReference>
<dbReference type="PANTHER" id="PTHR30372:SF4">
    <property type="entry name" value="LIPID-A-DISACCHARIDE SYNTHASE, MITOCHONDRIAL-RELATED"/>
    <property type="match status" value="1"/>
</dbReference>
<dbReference type="Pfam" id="PF02684">
    <property type="entry name" value="LpxB"/>
    <property type="match status" value="1"/>
</dbReference>
<dbReference type="SUPFAM" id="SSF53756">
    <property type="entry name" value="UDP-Glycosyltransferase/glycogen phosphorylase"/>
    <property type="match status" value="1"/>
</dbReference>
<organism>
    <name type="scientific">Escherichia coli O8 (strain IAI1)</name>
    <dbReference type="NCBI Taxonomy" id="585034"/>
    <lineage>
        <taxon>Bacteria</taxon>
        <taxon>Pseudomonadati</taxon>
        <taxon>Pseudomonadota</taxon>
        <taxon>Gammaproteobacteria</taxon>
        <taxon>Enterobacterales</taxon>
        <taxon>Enterobacteriaceae</taxon>
        <taxon>Escherichia</taxon>
    </lineage>
</organism>
<keyword id="KW-0328">Glycosyltransferase</keyword>
<keyword id="KW-0441">Lipid A biosynthesis</keyword>
<keyword id="KW-0444">Lipid biosynthesis</keyword>
<keyword id="KW-0443">Lipid metabolism</keyword>
<keyword id="KW-0808">Transferase</keyword>
<evidence type="ECO:0000255" key="1">
    <source>
        <dbReference type="HAMAP-Rule" id="MF_00392"/>
    </source>
</evidence>
<reference key="1">
    <citation type="journal article" date="2009" name="PLoS Genet.">
        <title>Organised genome dynamics in the Escherichia coli species results in highly diverse adaptive paths.</title>
        <authorList>
            <person name="Touchon M."/>
            <person name="Hoede C."/>
            <person name="Tenaillon O."/>
            <person name="Barbe V."/>
            <person name="Baeriswyl S."/>
            <person name="Bidet P."/>
            <person name="Bingen E."/>
            <person name="Bonacorsi S."/>
            <person name="Bouchier C."/>
            <person name="Bouvet O."/>
            <person name="Calteau A."/>
            <person name="Chiapello H."/>
            <person name="Clermont O."/>
            <person name="Cruveiller S."/>
            <person name="Danchin A."/>
            <person name="Diard M."/>
            <person name="Dossat C."/>
            <person name="Karoui M.E."/>
            <person name="Frapy E."/>
            <person name="Garry L."/>
            <person name="Ghigo J.M."/>
            <person name="Gilles A.M."/>
            <person name="Johnson J."/>
            <person name="Le Bouguenec C."/>
            <person name="Lescat M."/>
            <person name="Mangenot S."/>
            <person name="Martinez-Jehanne V."/>
            <person name="Matic I."/>
            <person name="Nassif X."/>
            <person name="Oztas S."/>
            <person name="Petit M.A."/>
            <person name="Pichon C."/>
            <person name="Rouy Z."/>
            <person name="Ruf C.S."/>
            <person name="Schneider D."/>
            <person name="Tourret J."/>
            <person name="Vacherie B."/>
            <person name="Vallenet D."/>
            <person name="Medigue C."/>
            <person name="Rocha E.P.C."/>
            <person name="Denamur E."/>
        </authorList>
    </citation>
    <scope>NUCLEOTIDE SEQUENCE [LARGE SCALE GENOMIC DNA]</scope>
    <source>
        <strain>IAI1</strain>
    </source>
</reference>